<comment type="function">
    <text evidence="1">Inner membrane component of the type II secretion system required for the energy-dependent secretion of extracellular factors such as proteases and toxins from the periplasm. Plays a role in the complex assembly and recruits ExeL resulting in a stable complex in the inner membrane. Provides thus a link between the energy-providing ExeE protein in the cytoplasm and the rest of the T2SS machinery.</text>
</comment>
<comment type="subunit">
    <text evidence="1 2 3">Type II secretion system is composed of four main components: the outer membrane complex, the inner membrane complex, the cytoplasmic secretion ATPase and the periplasm-spanning pseudopilus (By similarity). Forms homodimers (By similarity). Interacts with ExeL/GspL. Interacts with ExeE/GspE and ExeF/GspF (By similarity).</text>
</comment>
<comment type="subcellular location">
    <subcellularLocation>
        <location evidence="1">Cell inner membrane</location>
        <topology evidence="1">Single-pass membrane protein</topology>
    </subcellularLocation>
</comment>
<comment type="similarity">
    <text evidence="5">Belongs to the GSP M family.</text>
</comment>
<organism>
    <name type="scientific">Aeromonas hydrophila</name>
    <dbReference type="NCBI Taxonomy" id="644"/>
    <lineage>
        <taxon>Bacteria</taxon>
        <taxon>Pseudomonadati</taxon>
        <taxon>Pseudomonadota</taxon>
        <taxon>Gammaproteobacteria</taxon>
        <taxon>Aeromonadales</taxon>
        <taxon>Aeromonadaceae</taxon>
        <taxon>Aeromonas</taxon>
    </lineage>
</organism>
<feature type="chain" id="PRO_0000207322" description="Type II secretion system protein M">
    <location>
        <begin position="1"/>
        <end position="163"/>
    </location>
</feature>
<feature type="topological domain" description="Cytoplasmic" evidence="1">
    <location>
        <begin position="1"/>
        <end position="19"/>
    </location>
</feature>
<feature type="transmembrane region" description="Helical" evidence="4">
    <location>
        <begin position="20"/>
        <end position="40"/>
    </location>
</feature>
<feature type="topological domain" description="Periplasmic" evidence="1">
    <location>
        <begin position="41"/>
        <end position="163"/>
    </location>
</feature>
<name>GSPM_AERHY</name>
<evidence type="ECO:0000250" key="1">
    <source>
        <dbReference type="UniProtKB" id="P25061"/>
    </source>
</evidence>
<evidence type="ECO:0000250" key="2">
    <source>
        <dbReference type="UniProtKB" id="P41851"/>
    </source>
</evidence>
<evidence type="ECO:0000250" key="3">
    <source>
        <dbReference type="UniProtKB" id="Q00514"/>
    </source>
</evidence>
<evidence type="ECO:0000255" key="4"/>
<evidence type="ECO:0000305" key="5"/>
<protein>
    <recommendedName>
        <fullName>Type II secretion system protein M</fullName>
        <shortName>T2SS protein M</shortName>
    </recommendedName>
    <alternativeName>
        <fullName>General secretion pathway protein M</fullName>
    </alternativeName>
</protein>
<gene>
    <name type="primary">exeM</name>
</gene>
<accession>P41850</accession>
<proteinExistence type="inferred from homology"/>
<keyword id="KW-0997">Cell inner membrane</keyword>
<keyword id="KW-1003">Cell membrane</keyword>
<keyword id="KW-0472">Membrane</keyword>
<keyword id="KW-0653">Protein transport</keyword>
<keyword id="KW-0812">Transmembrane</keyword>
<keyword id="KW-1133">Transmembrane helix</keyword>
<keyword id="KW-0813">Transport</keyword>
<sequence>MMDKLQGWWRSISAREQRLVAVGGSCLLIGFCYWIVWQPIANRIAERERQVLSQQQTLAWLKEKGEEVLAMQGGQGRQIDTSGTLEGVVNRTAFNQKIKIARLQPQGQELQVWIDTVQFDDLLIWLASLADQHGVQVQVIEVARENLAPGLVKVRRLQLSRPQ</sequence>
<dbReference type="EMBL" id="X66504">
    <property type="protein sequence ID" value="CAA47134.1"/>
    <property type="molecule type" value="Genomic_DNA"/>
</dbReference>
<dbReference type="PIR" id="F49905">
    <property type="entry name" value="F49905"/>
</dbReference>
<dbReference type="SMR" id="P41850"/>
<dbReference type="eggNOG" id="COG3149">
    <property type="taxonomic scope" value="Bacteria"/>
</dbReference>
<dbReference type="GO" id="GO:0005886">
    <property type="term" value="C:plasma membrane"/>
    <property type="evidence" value="ECO:0007669"/>
    <property type="project" value="UniProtKB-SubCell"/>
</dbReference>
<dbReference type="GO" id="GO:0015627">
    <property type="term" value="C:type II protein secretion system complex"/>
    <property type="evidence" value="ECO:0007669"/>
    <property type="project" value="InterPro"/>
</dbReference>
<dbReference type="GO" id="GO:0015628">
    <property type="term" value="P:protein secretion by the type II secretion system"/>
    <property type="evidence" value="ECO:0007669"/>
    <property type="project" value="InterPro"/>
</dbReference>
<dbReference type="Gene3D" id="3.30.1360.100">
    <property type="entry name" value="General secretion pathway protein M, EpsM"/>
    <property type="match status" value="1"/>
</dbReference>
<dbReference type="InterPro" id="IPR007690">
    <property type="entry name" value="T2SS_GspM"/>
</dbReference>
<dbReference type="InterPro" id="IPR023229">
    <property type="entry name" value="T2SS_M_periplasmic_sf"/>
</dbReference>
<dbReference type="Pfam" id="PF04612">
    <property type="entry name" value="T2SSM"/>
    <property type="match status" value="1"/>
</dbReference>
<dbReference type="PIRSF" id="PIRSF006291">
    <property type="entry name" value="GspM"/>
    <property type="match status" value="1"/>
</dbReference>
<dbReference type="SUPFAM" id="SSF103054">
    <property type="entry name" value="General secretion pathway protein M, EpsM"/>
    <property type="match status" value="1"/>
</dbReference>
<reference key="1">
    <citation type="journal article" date="1993" name="J. Bacteriol.">
        <title>Isolation and analysis of eight exe genes and their involvement in extracellular protein secretion and outer membrane assembly in Aeromonas hydrophila.</title>
        <authorList>
            <person name="Howard S.P."/>
            <person name="Critch J."/>
            <person name="Bedi A."/>
        </authorList>
    </citation>
    <scope>NUCLEOTIDE SEQUENCE [GENOMIC DNA]</scope>
    <source>
        <strain>Ah65</strain>
    </source>
</reference>